<accession>Q5HUK3</accession>
<name>MNME_CAMJR</name>
<evidence type="ECO:0000255" key="1">
    <source>
        <dbReference type="HAMAP-Rule" id="MF_00379"/>
    </source>
</evidence>
<sequence length="442" mass="49096">MSDTIAAIATAHGVGSISIVRLSGERALEFALKLSHKTKLTPRHATFTKLFNQNNEIIDEAIMIYFKAPYSFTGEDIVEFQIHGGFSVSEVLLEELVSLGARLALAGEFSKRACLNGKMTPLKALNIQDLILSKSALAAKIIARNMQGNLGELLEKIRTDLVKTLAFVETSIDYADDDLPSDLLEQISTMCEENSKILKEIYTLSQSKKGLIEGFKIAIVGKPNVGKSSLLNALLSYERAIVSDIAGTTRDTIEESFKLGTHLLRIIDTAGIRESKDVIEQIGVALSKKSLEDADIILAVFDASRVQDKEDEKIFDLLANTDKKIFWILNKSDLENVFKNTQNKNFIKLSAQKDITLLKEELQNYLNSFDSEGIMVSSLDLINACKISSEAIFRAKGLLEESSLELFAFELNLAINELARFTKDFQRDEILDEMFGNFCLGK</sequence>
<feature type="chain" id="PRO_1000048811" description="tRNA modification GTPase MnmE">
    <location>
        <begin position="1"/>
        <end position="442"/>
    </location>
</feature>
<feature type="domain" description="TrmE-type G">
    <location>
        <begin position="214"/>
        <end position="367"/>
    </location>
</feature>
<feature type="binding site" evidence="1">
    <location>
        <position position="21"/>
    </location>
    <ligand>
        <name>(6S)-5-formyl-5,6,7,8-tetrahydrofolate</name>
        <dbReference type="ChEBI" id="CHEBI:57457"/>
    </ligand>
</feature>
<feature type="binding site" evidence="1">
    <location>
        <position position="79"/>
    </location>
    <ligand>
        <name>(6S)-5-formyl-5,6,7,8-tetrahydrofolate</name>
        <dbReference type="ChEBI" id="CHEBI:57457"/>
    </ligand>
</feature>
<feature type="binding site" evidence="1">
    <location>
        <position position="118"/>
    </location>
    <ligand>
        <name>(6S)-5-formyl-5,6,7,8-tetrahydrofolate</name>
        <dbReference type="ChEBI" id="CHEBI:57457"/>
    </ligand>
</feature>
<feature type="binding site" evidence="1">
    <location>
        <begin position="224"/>
        <end position="229"/>
    </location>
    <ligand>
        <name>GTP</name>
        <dbReference type="ChEBI" id="CHEBI:37565"/>
    </ligand>
</feature>
<feature type="binding site" evidence="1">
    <location>
        <position position="224"/>
    </location>
    <ligand>
        <name>K(+)</name>
        <dbReference type="ChEBI" id="CHEBI:29103"/>
    </ligand>
</feature>
<feature type="binding site" evidence="1">
    <location>
        <position position="228"/>
    </location>
    <ligand>
        <name>Mg(2+)</name>
        <dbReference type="ChEBI" id="CHEBI:18420"/>
    </ligand>
</feature>
<feature type="binding site" evidence="1">
    <location>
        <begin position="243"/>
        <end position="249"/>
    </location>
    <ligand>
        <name>GTP</name>
        <dbReference type="ChEBI" id="CHEBI:37565"/>
    </ligand>
</feature>
<feature type="binding site" evidence="1">
    <location>
        <position position="243"/>
    </location>
    <ligand>
        <name>K(+)</name>
        <dbReference type="ChEBI" id="CHEBI:29103"/>
    </ligand>
</feature>
<feature type="binding site" evidence="1">
    <location>
        <position position="245"/>
    </location>
    <ligand>
        <name>K(+)</name>
        <dbReference type="ChEBI" id="CHEBI:29103"/>
    </ligand>
</feature>
<feature type="binding site" evidence="1">
    <location>
        <position position="248"/>
    </location>
    <ligand>
        <name>K(+)</name>
        <dbReference type="ChEBI" id="CHEBI:29103"/>
    </ligand>
</feature>
<feature type="binding site" evidence="1">
    <location>
        <position position="249"/>
    </location>
    <ligand>
        <name>Mg(2+)</name>
        <dbReference type="ChEBI" id="CHEBI:18420"/>
    </ligand>
</feature>
<feature type="binding site" evidence="1">
    <location>
        <begin position="268"/>
        <end position="271"/>
    </location>
    <ligand>
        <name>GTP</name>
        <dbReference type="ChEBI" id="CHEBI:37565"/>
    </ligand>
</feature>
<feature type="binding site" evidence="1">
    <location>
        <position position="442"/>
    </location>
    <ligand>
        <name>(6S)-5-formyl-5,6,7,8-tetrahydrofolate</name>
        <dbReference type="ChEBI" id="CHEBI:57457"/>
    </ligand>
</feature>
<gene>
    <name evidence="1" type="primary">mnmE</name>
    <name evidence="1" type="synonym">trmE</name>
    <name type="ordered locus">CJE1036</name>
</gene>
<proteinExistence type="inferred from homology"/>
<dbReference type="EC" id="3.6.-.-" evidence="1"/>
<dbReference type="EMBL" id="CP000025">
    <property type="protein sequence ID" value="AAW35367.1"/>
    <property type="molecule type" value="Genomic_DNA"/>
</dbReference>
<dbReference type="RefSeq" id="WP_002867429.1">
    <property type="nucleotide sequence ID" value="NC_003912.7"/>
</dbReference>
<dbReference type="SMR" id="Q5HUK3"/>
<dbReference type="KEGG" id="cjr:CJE1036"/>
<dbReference type="HOGENOM" id="CLU_019624_4_1_7"/>
<dbReference type="GO" id="GO:0005829">
    <property type="term" value="C:cytosol"/>
    <property type="evidence" value="ECO:0007669"/>
    <property type="project" value="TreeGrafter"/>
</dbReference>
<dbReference type="GO" id="GO:0005525">
    <property type="term" value="F:GTP binding"/>
    <property type="evidence" value="ECO:0007669"/>
    <property type="project" value="UniProtKB-UniRule"/>
</dbReference>
<dbReference type="GO" id="GO:0003924">
    <property type="term" value="F:GTPase activity"/>
    <property type="evidence" value="ECO:0007669"/>
    <property type="project" value="UniProtKB-UniRule"/>
</dbReference>
<dbReference type="GO" id="GO:0046872">
    <property type="term" value="F:metal ion binding"/>
    <property type="evidence" value="ECO:0007669"/>
    <property type="project" value="UniProtKB-KW"/>
</dbReference>
<dbReference type="GO" id="GO:0030488">
    <property type="term" value="P:tRNA methylation"/>
    <property type="evidence" value="ECO:0007669"/>
    <property type="project" value="TreeGrafter"/>
</dbReference>
<dbReference type="GO" id="GO:0002098">
    <property type="term" value="P:tRNA wobble uridine modification"/>
    <property type="evidence" value="ECO:0007669"/>
    <property type="project" value="TreeGrafter"/>
</dbReference>
<dbReference type="CDD" id="cd04164">
    <property type="entry name" value="trmE"/>
    <property type="match status" value="1"/>
</dbReference>
<dbReference type="CDD" id="cd14858">
    <property type="entry name" value="TrmE_N"/>
    <property type="match status" value="1"/>
</dbReference>
<dbReference type="FunFam" id="3.40.50.300:FF:001376">
    <property type="entry name" value="tRNA modification GTPase MnmE"/>
    <property type="match status" value="1"/>
</dbReference>
<dbReference type="Gene3D" id="3.40.50.300">
    <property type="entry name" value="P-loop containing nucleotide triphosphate hydrolases"/>
    <property type="match status" value="1"/>
</dbReference>
<dbReference type="Gene3D" id="3.30.1360.120">
    <property type="entry name" value="Probable tRNA modification gtpase trme, domain 1"/>
    <property type="match status" value="1"/>
</dbReference>
<dbReference type="Gene3D" id="1.20.120.430">
    <property type="entry name" value="tRNA modification GTPase MnmE domain 2"/>
    <property type="match status" value="1"/>
</dbReference>
<dbReference type="HAMAP" id="MF_00379">
    <property type="entry name" value="GTPase_MnmE"/>
    <property type="match status" value="1"/>
</dbReference>
<dbReference type="InterPro" id="IPR031168">
    <property type="entry name" value="G_TrmE"/>
</dbReference>
<dbReference type="InterPro" id="IPR006073">
    <property type="entry name" value="GTP-bd"/>
</dbReference>
<dbReference type="InterPro" id="IPR018948">
    <property type="entry name" value="GTP-bd_TrmE_N"/>
</dbReference>
<dbReference type="InterPro" id="IPR004520">
    <property type="entry name" value="GTPase_MnmE"/>
</dbReference>
<dbReference type="InterPro" id="IPR027368">
    <property type="entry name" value="MnmE_dom2"/>
</dbReference>
<dbReference type="InterPro" id="IPR025867">
    <property type="entry name" value="MnmE_helical"/>
</dbReference>
<dbReference type="InterPro" id="IPR027417">
    <property type="entry name" value="P-loop_NTPase"/>
</dbReference>
<dbReference type="InterPro" id="IPR005225">
    <property type="entry name" value="Small_GTP-bd"/>
</dbReference>
<dbReference type="InterPro" id="IPR027266">
    <property type="entry name" value="TrmE/GcvT_dom1"/>
</dbReference>
<dbReference type="NCBIfam" id="TIGR00450">
    <property type="entry name" value="mnmE_trmE_thdF"/>
    <property type="match status" value="1"/>
</dbReference>
<dbReference type="NCBIfam" id="TIGR00231">
    <property type="entry name" value="small_GTP"/>
    <property type="match status" value="1"/>
</dbReference>
<dbReference type="PANTHER" id="PTHR42714">
    <property type="entry name" value="TRNA MODIFICATION GTPASE GTPBP3"/>
    <property type="match status" value="1"/>
</dbReference>
<dbReference type="PANTHER" id="PTHR42714:SF2">
    <property type="entry name" value="TRNA MODIFICATION GTPASE GTPBP3, MITOCHONDRIAL"/>
    <property type="match status" value="1"/>
</dbReference>
<dbReference type="Pfam" id="PF01926">
    <property type="entry name" value="MMR_HSR1"/>
    <property type="match status" value="1"/>
</dbReference>
<dbReference type="Pfam" id="PF12631">
    <property type="entry name" value="MnmE_helical"/>
    <property type="match status" value="1"/>
</dbReference>
<dbReference type="Pfam" id="PF10396">
    <property type="entry name" value="TrmE_N"/>
    <property type="match status" value="1"/>
</dbReference>
<dbReference type="SUPFAM" id="SSF103025">
    <property type="entry name" value="Folate-binding domain"/>
    <property type="match status" value="1"/>
</dbReference>
<dbReference type="SUPFAM" id="SSF52540">
    <property type="entry name" value="P-loop containing nucleoside triphosphate hydrolases"/>
    <property type="match status" value="1"/>
</dbReference>
<dbReference type="PROSITE" id="PS51709">
    <property type="entry name" value="G_TRME"/>
    <property type="match status" value="1"/>
</dbReference>
<protein>
    <recommendedName>
        <fullName evidence="1">tRNA modification GTPase MnmE</fullName>
        <ecNumber evidence="1">3.6.-.-</ecNumber>
    </recommendedName>
</protein>
<organism>
    <name type="scientific">Campylobacter jejuni (strain RM1221)</name>
    <dbReference type="NCBI Taxonomy" id="195099"/>
    <lineage>
        <taxon>Bacteria</taxon>
        <taxon>Pseudomonadati</taxon>
        <taxon>Campylobacterota</taxon>
        <taxon>Epsilonproteobacteria</taxon>
        <taxon>Campylobacterales</taxon>
        <taxon>Campylobacteraceae</taxon>
        <taxon>Campylobacter</taxon>
    </lineage>
</organism>
<keyword id="KW-0963">Cytoplasm</keyword>
<keyword id="KW-0342">GTP-binding</keyword>
<keyword id="KW-0378">Hydrolase</keyword>
<keyword id="KW-0460">Magnesium</keyword>
<keyword id="KW-0479">Metal-binding</keyword>
<keyword id="KW-0547">Nucleotide-binding</keyword>
<keyword id="KW-0630">Potassium</keyword>
<keyword id="KW-0819">tRNA processing</keyword>
<reference key="1">
    <citation type="journal article" date="2005" name="PLoS Biol.">
        <title>Major structural differences and novel potential virulence mechanisms from the genomes of multiple Campylobacter species.</title>
        <authorList>
            <person name="Fouts D.E."/>
            <person name="Mongodin E.F."/>
            <person name="Mandrell R.E."/>
            <person name="Miller W.G."/>
            <person name="Rasko D.A."/>
            <person name="Ravel J."/>
            <person name="Brinkac L.M."/>
            <person name="DeBoy R.T."/>
            <person name="Parker C.T."/>
            <person name="Daugherty S.C."/>
            <person name="Dodson R.J."/>
            <person name="Durkin A.S."/>
            <person name="Madupu R."/>
            <person name="Sullivan S.A."/>
            <person name="Shetty J.U."/>
            <person name="Ayodeji M.A."/>
            <person name="Shvartsbeyn A."/>
            <person name="Schatz M.C."/>
            <person name="Badger J.H."/>
            <person name="Fraser C.M."/>
            <person name="Nelson K.E."/>
        </authorList>
    </citation>
    <scope>NUCLEOTIDE SEQUENCE [LARGE SCALE GENOMIC DNA]</scope>
    <source>
        <strain>RM1221</strain>
    </source>
</reference>
<comment type="function">
    <text evidence="1">Exhibits a very high intrinsic GTPase hydrolysis rate. Involved in the addition of a carboxymethylaminomethyl (cmnm) group at the wobble position (U34) of certain tRNAs, forming tRNA-cmnm(5)s(2)U34.</text>
</comment>
<comment type="cofactor">
    <cofactor evidence="1">
        <name>K(+)</name>
        <dbReference type="ChEBI" id="CHEBI:29103"/>
    </cofactor>
    <text evidence="1">Binds 1 potassium ion per subunit.</text>
</comment>
<comment type="subunit">
    <text evidence="1">Homodimer. Heterotetramer of two MnmE and two MnmG subunits.</text>
</comment>
<comment type="subcellular location">
    <subcellularLocation>
        <location evidence="1">Cytoplasm</location>
    </subcellularLocation>
</comment>
<comment type="similarity">
    <text evidence="1">Belongs to the TRAFAC class TrmE-Era-EngA-EngB-Septin-like GTPase superfamily. TrmE GTPase family.</text>
</comment>